<accession>C0JB69</accession>
<name>B2I_SICPA</name>
<evidence type="ECO:0000250" key="1">
    <source>
        <dbReference type="UniProtKB" id="A0A0D4WTV1"/>
    </source>
</evidence>
<evidence type="ECO:0000250" key="2">
    <source>
        <dbReference type="UniProtKB" id="A0A0D4WV12"/>
    </source>
</evidence>
<evidence type="ECO:0000250" key="3">
    <source>
        <dbReference type="UniProtKB" id="P0CE80"/>
    </source>
</evidence>
<evidence type="ECO:0000250" key="4">
    <source>
        <dbReference type="UniProtKB" id="Q4ZFU2"/>
    </source>
</evidence>
<evidence type="ECO:0000250" key="5">
    <source>
        <dbReference type="UniProtKB" id="Q8I914"/>
    </source>
</evidence>
<evidence type="ECO:0000303" key="6">
    <source>
    </source>
</evidence>
<evidence type="ECO:0000305" key="7"/>
<evidence type="ECO:0000305" key="8">
    <source>
    </source>
</evidence>
<keyword id="KW-0204">Cytolysis</keyword>
<keyword id="KW-1061">Dermonecrotic toxin</keyword>
<keyword id="KW-1015">Disulfide bond</keyword>
<keyword id="KW-0354">Hemolysis</keyword>
<keyword id="KW-0442">Lipid degradation</keyword>
<keyword id="KW-0443">Lipid metabolism</keyword>
<keyword id="KW-0456">Lyase</keyword>
<keyword id="KW-0460">Magnesium</keyword>
<keyword id="KW-0479">Metal-binding</keyword>
<keyword id="KW-0964">Secreted</keyword>
<keyword id="KW-0800">Toxin</keyword>
<dbReference type="EC" id="4.6.1.-" evidence="4"/>
<dbReference type="EMBL" id="FJ171504">
    <property type="protein sequence ID" value="ACN49000.1"/>
    <property type="molecule type" value="mRNA"/>
</dbReference>
<dbReference type="SMR" id="C0JB69"/>
<dbReference type="GO" id="GO:0005576">
    <property type="term" value="C:extracellular region"/>
    <property type="evidence" value="ECO:0007669"/>
    <property type="project" value="UniProtKB-SubCell"/>
</dbReference>
<dbReference type="GO" id="GO:0016829">
    <property type="term" value="F:lyase activity"/>
    <property type="evidence" value="ECO:0007669"/>
    <property type="project" value="UniProtKB-KW"/>
</dbReference>
<dbReference type="GO" id="GO:0046872">
    <property type="term" value="F:metal ion binding"/>
    <property type="evidence" value="ECO:0007669"/>
    <property type="project" value="UniProtKB-KW"/>
</dbReference>
<dbReference type="GO" id="GO:0008081">
    <property type="term" value="F:phosphoric diester hydrolase activity"/>
    <property type="evidence" value="ECO:0007669"/>
    <property type="project" value="InterPro"/>
</dbReference>
<dbReference type="GO" id="GO:0090729">
    <property type="term" value="F:toxin activity"/>
    <property type="evidence" value="ECO:0007669"/>
    <property type="project" value="UniProtKB-KW"/>
</dbReference>
<dbReference type="GO" id="GO:0031640">
    <property type="term" value="P:killing of cells of another organism"/>
    <property type="evidence" value="ECO:0007669"/>
    <property type="project" value="UniProtKB-KW"/>
</dbReference>
<dbReference type="GO" id="GO:0016042">
    <property type="term" value="P:lipid catabolic process"/>
    <property type="evidence" value="ECO:0007669"/>
    <property type="project" value="UniProtKB-KW"/>
</dbReference>
<dbReference type="CDD" id="cd08576">
    <property type="entry name" value="GDPD_like_SMaseD_PLD"/>
    <property type="match status" value="1"/>
</dbReference>
<dbReference type="Gene3D" id="3.20.20.190">
    <property type="entry name" value="Phosphatidylinositol (PI) phosphodiesterase"/>
    <property type="match status" value="1"/>
</dbReference>
<dbReference type="InterPro" id="IPR017946">
    <property type="entry name" value="PLC-like_Pdiesterase_TIM-brl"/>
</dbReference>
<dbReference type="SUPFAM" id="SSF51695">
    <property type="entry name" value="PLC-like phosphodiesterases"/>
    <property type="match status" value="1"/>
</dbReference>
<sequence>WIMGHMVNAIEQVDEFLNLGANAIEFDIDFDENGIAKYTHHGIPCDCGRLCTKSAVFTEYLDNVRQVTSPGDPKFRKELVLLALDLKLQRISSEKAYVAGVDVATKLLDHYWKRGWNGGRAYILLNIPLVEDYEFIKGFKDTLRKEGHEQYNAKVGINFTGNEDLDEIRKVLEKLGEDEHIWQADGITSCFPRGTDRLEKALEKRDTPGYKYISKVYAWTLVRSSIMRRSLRLNVDGVMSNYPDRVVGVLKEKEFADKFRLATYADNPWEKFTSI</sequence>
<proteinExistence type="evidence at transcript level"/>
<comment type="function">
    <text evidence="1 3">Dermonecrotic toxins cleave the phosphodiester linkage between the phosphate and headgroup of certain phospholipids (sphingolipid and lysolipid substrates), forming an alcohol (often choline) and a cyclic phosphate (By similarity). This toxin acts on sphingomyelin (SM) (By similarity). It may also act on ceramide phosphoethanolamine (CPE), lysophosphatidylcholine (LPC) and lysophosphatidylethanolamine (LPE), but not on lysophosphatidylserine (LPS), and lysophosphatidylglycerol (LPG) (By similarity). It acts by transphosphatidylation, releasing exclusively cyclic phosphate products as second products (By similarity). Induces dermonecrosis, hemolysis, increased vascular permeability, edema, inflammatory response, and platelet aggregation (By similarity).</text>
</comment>
<comment type="catalytic activity">
    <reaction evidence="1">
        <text>an N-(acyl)-sphingosylphosphocholine = an N-(acyl)-sphingosyl-1,3-cyclic phosphate + choline</text>
        <dbReference type="Rhea" id="RHEA:60652"/>
        <dbReference type="ChEBI" id="CHEBI:15354"/>
        <dbReference type="ChEBI" id="CHEBI:64583"/>
        <dbReference type="ChEBI" id="CHEBI:143892"/>
    </reaction>
</comment>
<comment type="catalytic activity">
    <reaction evidence="1">
        <text>an N-(acyl)-sphingosylphosphoethanolamine = an N-(acyl)-sphingosyl-1,3-cyclic phosphate + ethanolamine</text>
        <dbReference type="Rhea" id="RHEA:60648"/>
        <dbReference type="ChEBI" id="CHEBI:57603"/>
        <dbReference type="ChEBI" id="CHEBI:143891"/>
        <dbReference type="ChEBI" id="CHEBI:143892"/>
    </reaction>
</comment>
<comment type="catalytic activity">
    <reaction evidence="1">
        <text>a 1-acyl-sn-glycero-3-phosphocholine = a 1-acyl-sn-glycero-2,3-cyclic phosphate + choline</text>
        <dbReference type="Rhea" id="RHEA:60700"/>
        <dbReference type="ChEBI" id="CHEBI:15354"/>
        <dbReference type="ChEBI" id="CHEBI:58168"/>
        <dbReference type="ChEBI" id="CHEBI:143947"/>
    </reaction>
</comment>
<comment type="catalytic activity">
    <reaction evidence="1">
        <text>a 1-acyl-sn-glycero-3-phosphoethanolamine = a 1-acyl-sn-glycero-2,3-cyclic phosphate + ethanolamine</text>
        <dbReference type="Rhea" id="RHEA:60704"/>
        <dbReference type="ChEBI" id="CHEBI:57603"/>
        <dbReference type="ChEBI" id="CHEBI:64381"/>
        <dbReference type="ChEBI" id="CHEBI:143947"/>
    </reaction>
</comment>
<comment type="cofactor">
    <cofactor evidence="5">
        <name>Mg(2+)</name>
        <dbReference type="ChEBI" id="CHEBI:18420"/>
    </cofactor>
    <text evidence="5">Binds 1 Mg(2+) ion per subunit.</text>
</comment>
<comment type="subcellular location">
    <subcellularLocation>
        <location evidence="8">Secreted</location>
    </subcellularLocation>
</comment>
<comment type="tissue specificity">
    <text evidence="8">Expressed by the venom gland.</text>
</comment>
<comment type="similarity">
    <text evidence="7">Belongs to the arthropod phospholipase D family. Class II subfamily.</text>
</comment>
<comment type="caution">
    <text evidence="1 2 4">The most common activity assay for dermonecrotic toxins detects enzymatic activity by monitoring choline release from substrate. Liberation of choline from sphingomyelin (SM) or lysophosphatidylcholine (LPC) is commonly assumed to result from substrate hydrolysis, giving either ceramide-1-phosphate (C1P) or lysophosphatidic acid (LPA), respectively, as a second product. However, two studies from Lajoie and colleagues (2013 and 2015) report the observation of exclusive formation of cyclic phosphate products as second products, resulting from intramolecular transphosphatidylation. Cyclic phosphates have vastly different biological properties from their monoester counterparts, and they may be relevant to the pathology of brown spider envenomation.</text>
</comment>
<organism>
    <name type="scientific">Sicarius patagonicus</name>
    <name type="common">Six-eyed sand spider</name>
    <dbReference type="NCBI Taxonomy" id="571540"/>
    <lineage>
        <taxon>Eukaryota</taxon>
        <taxon>Metazoa</taxon>
        <taxon>Ecdysozoa</taxon>
        <taxon>Arthropoda</taxon>
        <taxon>Chelicerata</taxon>
        <taxon>Arachnida</taxon>
        <taxon>Araneae</taxon>
        <taxon>Araneomorphae</taxon>
        <taxon>Haplogynae</taxon>
        <taxon>Scytodoidea</taxon>
        <taxon>Sicariidae</taxon>
        <taxon>Sicarius</taxon>
    </lineage>
</organism>
<feature type="chain" id="PRO_0000392878" description="Dermonecrotic toxin SpaSicTox-betaIIA2">
    <location>
        <begin position="1" status="less than"/>
        <end position="275"/>
    </location>
</feature>
<feature type="active site" evidence="5">
    <location>
        <position position="5"/>
    </location>
</feature>
<feature type="active site" description="Nucleophile" evidence="5">
    <location>
        <position position="41"/>
    </location>
</feature>
<feature type="binding site" evidence="5">
    <location>
        <position position="25"/>
    </location>
    <ligand>
        <name>Mg(2+)</name>
        <dbReference type="ChEBI" id="CHEBI:18420"/>
    </ligand>
</feature>
<feature type="binding site" evidence="5">
    <location>
        <position position="27"/>
    </location>
    <ligand>
        <name>Mg(2+)</name>
        <dbReference type="ChEBI" id="CHEBI:18420"/>
    </ligand>
</feature>
<feature type="binding site" evidence="5">
    <location>
        <position position="85"/>
    </location>
    <ligand>
        <name>Mg(2+)</name>
        <dbReference type="ChEBI" id="CHEBI:18420"/>
    </ligand>
</feature>
<feature type="disulfide bond" evidence="3">
    <location>
        <begin position="45"/>
        <end position="51"/>
    </location>
</feature>
<feature type="disulfide bond" evidence="3">
    <location>
        <begin position="47"/>
        <end position="190"/>
    </location>
</feature>
<feature type="non-terminal residue">
    <location>
        <position position="1"/>
    </location>
</feature>
<protein>
    <recommendedName>
        <fullName evidence="6">Dermonecrotic toxin SpaSicTox-betaIIA2</fullName>
        <ecNumber evidence="4">4.6.1.-</ecNumber>
    </recommendedName>
    <alternativeName>
        <fullName>Phospholipase D</fullName>
        <shortName>PLD</shortName>
    </alternativeName>
    <alternativeName>
        <fullName>Sphingomyelin phosphodiesterase D</fullName>
        <shortName>SMD</shortName>
        <shortName>SMase D</shortName>
        <shortName>Sphingomyelinase D</shortName>
    </alternativeName>
</protein>
<reference key="1">
    <citation type="journal article" date="2009" name="Mol. Biol. Evol.">
        <title>Molecular evolution, functional variation, and proposed nomenclature of the gene family that includes sphingomyelinase D in sicariid spider venoms.</title>
        <authorList>
            <person name="Binford G.J."/>
            <person name="Bodner M.R."/>
            <person name="Cordes M.H."/>
            <person name="Baldwin K.L."/>
            <person name="Rynerson M.R."/>
            <person name="Burns S.N."/>
            <person name="Zobel-Thropp P.A."/>
        </authorList>
    </citation>
    <scope>NUCLEOTIDE SEQUENCE [MRNA]</scope>
    <scope>NOMENCLATURE</scope>
    <source>
        <tissue>Venom gland</tissue>
    </source>
</reference>